<proteinExistence type="inferred from homology"/>
<feature type="chain" id="PRO_0000383994" description="Lactate utilization protein C">
    <location>
        <begin position="1"/>
        <end position="236"/>
    </location>
</feature>
<gene>
    <name evidence="1" type="primary">lutC</name>
    <name type="ordered locus">BCE_1418</name>
</gene>
<sequence>MTGLIQNRESFLDNIAKELGRARKTDGVKRPVWKNNVNKETLKNYSQEELLEVFKNQCTNIHTTVVETTNDRLREDIQKVIVENGGGPIMLSADERFDSYGLTSLFKEELPKQNVEVNVWDPEKKEENMRIAERANIGIAFSDYTLAESGTIVVQSHKGQGRSLHFLPTVYFAIIPRETLVPRITQAVEDMNKRVENGETVASCINFITGPSNSADIEMNLVVGVHGPLKAVYFIV</sequence>
<evidence type="ECO:0000255" key="1">
    <source>
        <dbReference type="HAMAP-Rule" id="MF_02104"/>
    </source>
</evidence>
<dbReference type="EMBL" id="AE017194">
    <property type="protein sequence ID" value="AAS40347.1"/>
    <property type="molecule type" value="Genomic_DNA"/>
</dbReference>
<dbReference type="SMR" id="Q73BK0"/>
<dbReference type="DNASU" id="2749237"/>
<dbReference type="KEGG" id="bca:BCE_1418"/>
<dbReference type="HOGENOM" id="CLU_090664_1_0_9"/>
<dbReference type="Proteomes" id="UP000002527">
    <property type="component" value="Chromosome"/>
</dbReference>
<dbReference type="GO" id="GO:0006089">
    <property type="term" value="P:lactate metabolic process"/>
    <property type="evidence" value="ECO:0007669"/>
    <property type="project" value="UniProtKB-UniRule"/>
</dbReference>
<dbReference type="Gene3D" id="3.40.50.10420">
    <property type="entry name" value="NagB/RpiA/CoA transferase-like"/>
    <property type="match status" value="1"/>
</dbReference>
<dbReference type="HAMAP" id="MF_02104">
    <property type="entry name" value="LutC"/>
    <property type="match status" value="1"/>
</dbReference>
<dbReference type="InterPro" id="IPR024185">
    <property type="entry name" value="FTHF_cligase-like_sf"/>
</dbReference>
<dbReference type="InterPro" id="IPR003741">
    <property type="entry name" value="LUD_dom"/>
</dbReference>
<dbReference type="InterPro" id="IPR022823">
    <property type="entry name" value="LutC"/>
</dbReference>
<dbReference type="InterPro" id="IPR037171">
    <property type="entry name" value="NagB/RpiA_transferase-like"/>
</dbReference>
<dbReference type="PANTHER" id="PTHR43682">
    <property type="entry name" value="LACTATE UTILIZATION PROTEIN C"/>
    <property type="match status" value="1"/>
</dbReference>
<dbReference type="PANTHER" id="PTHR43682:SF1">
    <property type="entry name" value="LACTATE UTILIZATION PROTEIN C"/>
    <property type="match status" value="1"/>
</dbReference>
<dbReference type="Pfam" id="PF02589">
    <property type="entry name" value="LUD_dom"/>
    <property type="match status" value="1"/>
</dbReference>
<dbReference type="SUPFAM" id="SSF100950">
    <property type="entry name" value="NagB/RpiA/CoA transferase-like"/>
    <property type="match status" value="1"/>
</dbReference>
<accession>Q73BK0</accession>
<comment type="function">
    <text evidence="1">Is involved in L-lactate degradation and allows cells to grow with lactate as the sole carbon source.</text>
</comment>
<comment type="similarity">
    <text evidence="1">Belongs to the LutC/YkgG family.</text>
</comment>
<reference key="1">
    <citation type="journal article" date="2004" name="Nucleic Acids Res.">
        <title>The genome sequence of Bacillus cereus ATCC 10987 reveals metabolic adaptations and a large plasmid related to Bacillus anthracis pXO1.</title>
        <authorList>
            <person name="Rasko D.A."/>
            <person name="Ravel J."/>
            <person name="Oekstad O.A."/>
            <person name="Helgason E."/>
            <person name="Cer R.Z."/>
            <person name="Jiang L."/>
            <person name="Shores K.A."/>
            <person name="Fouts D.E."/>
            <person name="Tourasse N.J."/>
            <person name="Angiuoli S.V."/>
            <person name="Kolonay J.F."/>
            <person name="Nelson W.C."/>
            <person name="Kolstoe A.-B."/>
            <person name="Fraser C.M."/>
            <person name="Read T.D."/>
        </authorList>
    </citation>
    <scope>NUCLEOTIDE SEQUENCE [LARGE SCALE GENOMIC DNA]</scope>
    <source>
        <strain>ATCC 10987 / NRS 248</strain>
    </source>
</reference>
<organism>
    <name type="scientific">Bacillus cereus (strain ATCC 10987 / NRS 248)</name>
    <dbReference type="NCBI Taxonomy" id="222523"/>
    <lineage>
        <taxon>Bacteria</taxon>
        <taxon>Bacillati</taxon>
        <taxon>Bacillota</taxon>
        <taxon>Bacilli</taxon>
        <taxon>Bacillales</taxon>
        <taxon>Bacillaceae</taxon>
        <taxon>Bacillus</taxon>
        <taxon>Bacillus cereus group</taxon>
    </lineage>
</organism>
<protein>
    <recommendedName>
        <fullName evidence="1">Lactate utilization protein C</fullName>
    </recommendedName>
</protein>
<name>LUTC_BACC1</name>